<dbReference type="EC" id="2.7.7.56" evidence="1"/>
<dbReference type="EMBL" id="AE007869">
    <property type="protein sequence ID" value="AAK86144.2"/>
    <property type="molecule type" value="Genomic_DNA"/>
</dbReference>
<dbReference type="PIR" id="AG2616">
    <property type="entry name" value="AG2616"/>
</dbReference>
<dbReference type="PIR" id="G97398">
    <property type="entry name" value="G97398"/>
</dbReference>
<dbReference type="RefSeq" id="NP_353359.2">
    <property type="nucleotide sequence ID" value="NC_003062.2"/>
</dbReference>
<dbReference type="RefSeq" id="WP_006310174.1">
    <property type="nucleotide sequence ID" value="NC_003062.2"/>
</dbReference>
<dbReference type="SMR" id="Q8UIG8"/>
<dbReference type="STRING" id="176299.Atu0327"/>
<dbReference type="EnsemblBacteria" id="AAK86144">
    <property type="protein sequence ID" value="AAK86144"/>
    <property type="gene ID" value="Atu0327"/>
</dbReference>
<dbReference type="GeneID" id="1132365"/>
<dbReference type="KEGG" id="atu:Atu0327"/>
<dbReference type="PATRIC" id="fig|176299.10.peg.319"/>
<dbReference type="eggNOG" id="COG0689">
    <property type="taxonomic scope" value="Bacteria"/>
</dbReference>
<dbReference type="HOGENOM" id="CLU_050858_0_0_5"/>
<dbReference type="OrthoDB" id="9802265at2"/>
<dbReference type="PhylomeDB" id="Q8UIG8"/>
<dbReference type="BioCyc" id="AGRO:ATU0327-MONOMER"/>
<dbReference type="Proteomes" id="UP000000813">
    <property type="component" value="Chromosome circular"/>
</dbReference>
<dbReference type="GO" id="GO:0000175">
    <property type="term" value="F:3'-5'-RNA exonuclease activity"/>
    <property type="evidence" value="ECO:0007669"/>
    <property type="project" value="UniProtKB-UniRule"/>
</dbReference>
<dbReference type="GO" id="GO:0000049">
    <property type="term" value="F:tRNA binding"/>
    <property type="evidence" value="ECO:0007669"/>
    <property type="project" value="UniProtKB-UniRule"/>
</dbReference>
<dbReference type="GO" id="GO:0009022">
    <property type="term" value="F:tRNA nucleotidyltransferase activity"/>
    <property type="evidence" value="ECO:0007669"/>
    <property type="project" value="UniProtKB-UniRule"/>
</dbReference>
<dbReference type="GO" id="GO:0016075">
    <property type="term" value="P:rRNA catabolic process"/>
    <property type="evidence" value="ECO:0007669"/>
    <property type="project" value="UniProtKB-UniRule"/>
</dbReference>
<dbReference type="GO" id="GO:0006364">
    <property type="term" value="P:rRNA processing"/>
    <property type="evidence" value="ECO:0007669"/>
    <property type="project" value="UniProtKB-KW"/>
</dbReference>
<dbReference type="GO" id="GO:0008033">
    <property type="term" value="P:tRNA processing"/>
    <property type="evidence" value="ECO:0007669"/>
    <property type="project" value="UniProtKB-UniRule"/>
</dbReference>
<dbReference type="CDD" id="cd11362">
    <property type="entry name" value="RNase_PH_bact"/>
    <property type="match status" value="1"/>
</dbReference>
<dbReference type="FunFam" id="3.30.230.70:FF:000003">
    <property type="entry name" value="Ribonuclease PH"/>
    <property type="match status" value="1"/>
</dbReference>
<dbReference type="Gene3D" id="3.30.230.70">
    <property type="entry name" value="GHMP Kinase, N-terminal domain"/>
    <property type="match status" value="1"/>
</dbReference>
<dbReference type="HAMAP" id="MF_00564">
    <property type="entry name" value="RNase_PH"/>
    <property type="match status" value="1"/>
</dbReference>
<dbReference type="InterPro" id="IPR001247">
    <property type="entry name" value="ExoRNase_PH_dom1"/>
</dbReference>
<dbReference type="InterPro" id="IPR015847">
    <property type="entry name" value="ExoRNase_PH_dom2"/>
</dbReference>
<dbReference type="InterPro" id="IPR036345">
    <property type="entry name" value="ExoRNase_PH_dom2_sf"/>
</dbReference>
<dbReference type="InterPro" id="IPR027408">
    <property type="entry name" value="PNPase/RNase_PH_dom_sf"/>
</dbReference>
<dbReference type="InterPro" id="IPR020568">
    <property type="entry name" value="Ribosomal_Su5_D2-typ_SF"/>
</dbReference>
<dbReference type="InterPro" id="IPR050080">
    <property type="entry name" value="RNase_PH"/>
</dbReference>
<dbReference type="InterPro" id="IPR002381">
    <property type="entry name" value="RNase_PH_bac-type"/>
</dbReference>
<dbReference type="InterPro" id="IPR018336">
    <property type="entry name" value="RNase_PH_CS"/>
</dbReference>
<dbReference type="NCBIfam" id="TIGR01966">
    <property type="entry name" value="RNasePH"/>
    <property type="match status" value="1"/>
</dbReference>
<dbReference type="PANTHER" id="PTHR11953">
    <property type="entry name" value="EXOSOME COMPLEX COMPONENT"/>
    <property type="match status" value="1"/>
</dbReference>
<dbReference type="PANTHER" id="PTHR11953:SF0">
    <property type="entry name" value="EXOSOME COMPLEX COMPONENT RRP41"/>
    <property type="match status" value="1"/>
</dbReference>
<dbReference type="Pfam" id="PF01138">
    <property type="entry name" value="RNase_PH"/>
    <property type="match status" value="1"/>
</dbReference>
<dbReference type="Pfam" id="PF03725">
    <property type="entry name" value="RNase_PH_C"/>
    <property type="match status" value="1"/>
</dbReference>
<dbReference type="SUPFAM" id="SSF55666">
    <property type="entry name" value="Ribonuclease PH domain 2-like"/>
    <property type="match status" value="1"/>
</dbReference>
<dbReference type="SUPFAM" id="SSF54211">
    <property type="entry name" value="Ribosomal protein S5 domain 2-like"/>
    <property type="match status" value="1"/>
</dbReference>
<dbReference type="PROSITE" id="PS01277">
    <property type="entry name" value="RIBONUCLEASE_PH"/>
    <property type="match status" value="1"/>
</dbReference>
<gene>
    <name evidence="1" type="primary">rph</name>
    <name type="ordered locus">Atu0327</name>
    <name type="ORF">AGR_C_571</name>
</gene>
<keyword id="KW-0548">Nucleotidyltransferase</keyword>
<keyword id="KW-1185">Reference proteome</keyword>
<keyword id="KW-0694">RNA-binding</keyword>
<keyword id="KW-0698">rRNA processing</keyword>
<keyword id="KW-0808">Transferase</keyword>
<keyword id="KW-0819">tRNA processing</keyword>
<keyword id="KW-0820">tRNA-binding</keyword>
<comment type="function">
    <text evidence="1">Phosphorolytic 3'-5' exoribonuclease that plays an important role in tRNA 3'-end maturation. Removes nucleotide residues following the 3'-CCA terminus of tRNAs; can also add nucleotides to the ends of RNA molecules by using nucleoside diphosphates as substrates, but this may not be physiologically important. Probably plays a role in initiation of 16S rRNA degradation (leading to ribosome degradation) during starvation.</text>
</comment>
<comment type="catalytic activity">
    <reaction evidence="1">
        <text>tRNA(n+1) + phosphate = tRNA(n) + a ribonucleoside 5'-diphosphate</text>
        <dbReference type="Rhea" id="RHEA:10628"/>
        <dbReference type="Rhea" id="RHEA-COMP:17343"/>
        <dbReference type="Rhea" id="RHEA-COMP:17344"/>
        <dbReference type="ChEBI" id="CHEBI:43474"/>
        <dbReference type="ChEBI" id="CHEBI:57930"/>
        <dbReference type="ChEBI" id="CHEBI:173114"/>
        <dbReference type="EC" id="2.7.7.56"/>
    </reaction>
</comment>
<comment type="subunit">
    <text evidence="1">Homohexameric ring arranged as a trimer of dimers.</text>
</comment>
<comment type="similarity">
    <text evidence="1">Belongs to the RNase PH family.</text>
</comment>
<sequence>MRPSGRKTDQMRKVSFERNFSKHAEGSCLVKFGDTHVLVTASLEEKTPPWLRNSGKGWVTAEYGMLPRSTNERMKREAASGKQGGRTQEIQRLIGRSLRAVVDLQALGERQISIDCDVIQADGGTRTASITGAWIALHDCLKWMETRNMIKVEKVLKDHIAAISCGIFAKQPVIDLDYLEDSSAETDANFVITGSGGIVEVQGTAEGAPFSEEEFLTLLGLAKAGCSELVALQKQAIA</sequence>
<organism>
    <name type="scientific">Agrobacterium fabrum (strain C58 / ATCC 33970)</name>
    <name type="common">Agrobacterium tumefaciens (strain C58)</name>
    <dbReference type="NCBI Taxonomy" id="176299"/>
    <lineage>
        <taxon>Bacteria</taxon>
        <taxon>Pseudomonadati</taxon>
        <taxon>Pseudomonadota</taxon>
        <taxon>Alphaproteobacteria</taxon>
        <taxon>Hyphomicrobiales</taxon>
        <taxon>Rhizobiaceae</taxon>
        <taxon>Rhizobium/Agrobacterium group</taxon>
        <taxon>Agrobacterium</taxon>
        <taxon>Agrobacterium tumefaciens complex</taxon>
    </lineage>
</organism>
<protein>
    <recommendedName>
        <fullName evidence="1">Ribonuclease PH</fullName>
        <shortName evidence="1">RNase PH</shortName>
        <ecNumber evidence="1">2.7.7.56</ecNumber>
    </recommendedName>
    <alternativeName>
        <fullName evidence="1">tRNA nucleotidyltransferase</fullName>
    </alternativeName>
</protein>
<feature type="chain" id="PRO_0000139859" description="Ribonuclease PH">
    <location>
        <begin position="1"/>
        <end position="238"/>
    </location>
</feature>
<feature type="binding site" evidence="1">
    <location>
        <position position="86"/>
    </location>
    <ligand>
        <name>phosphate</name>
        <dbReference type="ChEBI" id="CHEBI:43474"/>
        <note>substrate</note>
    </ligand>
</feature>
<feature type="binding site" evidence="1">
    <location>
        <begin position="124"/>
        <end position="126"/>
    </location>
    <ligand>
        <name>phosphate</name>
        <dbReference type="ChEBI" id="CHEBI:43474"/>
        <note>substrate</note>
    </ligand>
</feature>
<accession>Q8UIG8</accession>
<reference key="1">
    <citation type="journal article" date="2001" name="Science">
        <title>The genome of the natural genetic engineer Agrobacterium tumefaciens C58.</title>
        <authorList>
            <person name="Wood D.W."/>
            <person name="Setubal J.C."/>
            <person name="Kaul R."/>
            <person name="Monks D.E."/>
            <person name="Kitajima J.P."/>
            <person name="Okura V.K."/>
            <person name="Zhou Y."/>
            <person name="Chen L."/>
            <person name="Wood G.E."/>
            <person name="Almeida N.F. Jr."/>
            <person name="Woo L."/>
            <person name="Chen Y."/>
            <person name="Paulsen I.T."/>
            <person name="Eisen J.A."/>
            <person name="Karp P.D."/>
            <person name="Bovee D. Sr."/>
            <person name="Chapman P."/>
            <person name="Clendenning J."/>
            <person name="Deatherage G."/>
            <person name="Gillet W."/>
            <person name="Grant C."/>
            <person name="Kutyavin T."/>
            <person name="Levy R."/>
            <person name="Li M.-J."/>
            <person name="McClelland E."/>
            <person name="Palmieri A."/>
            <person name="Raymond C."/>
            <person name="Rouse G."/>
            <person name="Saenphimmachak C."/>
            <person name="Wu Z."/>
            <person name="Romero P."/>
            <person name="Gordon D."/>
            <person name="Zhang S."/>
            <person name="Yoo H."/>
            <person name="Tao Y."/>
            <person name="Biddle P."/>
            <person name="Jung M."/>
            <person name="Krespan W."/>
            <person name="Perry M."/>
            <person name="Gordon-Kamm B."/>
            <person name="Liao L."/>
            <person name="Kim S."/>
            <person name="Hendrick C."/>
            <person name="Zhao Z.-Y."/>
            <person name="Dolan M."/>
            <person name="Chumley F."/>
            <person name="Tingey S.V."/>
            <person name="Tomb J.-F."/>
            <person name="Gordon M.P."/>
            <person name="Olson M.V."/>
            <person name="Nester E.W."/>
        </authorList>
    </citation>
    <scope>NUCLEOTIDE SEQUENCE [LARGE SCALE GENOMIC DNA]</scope>
    <source>
        <strain>C58 / ATCC 33970</strain>
    </source>
</reference>
<reference key="2">
    <citation type="journal article" date="2001" name="Science">
        <title>Genome sequence of the plant pathogen and biotechnology agent Agrobacterium tumefaciens C58.</title>
        <authorList>
            <person name="Goodner B."/>
            <person name="Hinkle G."/>
            <person name="Gattung S."/>
            <person name="Miller N."/>
            <person name="Blanchard M."/>
            <person name="Qurollo B."/>
            <person name="Goldman B.S."/>
            <person name="Cao Y."/>
            <person name="Askenazi M."/>
            <person name="Halling C."/>
            <person name="Mullin L."/>
            <person name="Houmiel K."/>
            <person name="Gordon J."/>
            <person name="Vaudin M."/>
            <person name="Iartchouk O."/>
            <person name="Epp A."/>
            <person name="Liu F."/>
            <person name="Wollam C."/>
            <person name="Allinger M."/>
            <person name="Doughty D."/>
            <person name="Scott C."/>
            <person name="Lappas C."/>
            <person name="Markelz B."/>
            <person name="Flanagan C."/>
            <person name="Crowell C."/>
            <person name="Gurson J."/>
            <person name="Lomo C."/>
            <person name="Sear C."/>
            <person name="Strub G."/>
            <person name="Cielo C."/>
            <person name="Slater S."/>
        </authorList>
    </citation>
    <scope>NUCLEOTIDE SEQUENCE [LARGE SCALE GENOMIC DNA]</scope>
    <source>
        <strain>C58 / ATCC 33970</strain>
    </source>
</reference>
<evidence type="ECO:0000255" key="1">
    <source>
        <dbReference type="HAMAP-Rule" id="MF_00564"/>
    </source>
</evidence>
<name>RNPH_AGRFC</name>
<proteinExistence type="inferred from homology"/>